<evidence type="ECO:0000255" key="1">
    <source>
        <dbReference type="HAMAP-Rule" id="MF_01857"/>
    </source>
</evidence>
<keyword id="KW-0963">Cytoplasm</keyword>
<keyword id="KW-0489">Methyltransferase</keyword>
<keyword id="KW-1185">Reference proteome</keyword>
<keyword id="KW-0694">RNA-binding</keyword>
<keyword id="KW-0698">rRNA processing</keyword>
<keyword id="KW-0949">S-adenosyl-L-methionine</keyword>
<keyword id="KW-0808">Transferase</keyword>
<gene>
    <name evidence="1" type="primary">rlmI</name>
    <name type="ordered locus">Ecok1_08820</name>
    <name type="ORF">APECO1_72</name>
</gene>
<organism>
    <name type="scientific">Escherichia coli O1:K1 / APEC</name>
    <dbReference type="NCBI Taxonomy" id="405955"/>
    <lineage>
        <taxon>Bacteria</taxon>
        <taxon>Pseudomonadati</taxon>
        <taxon>Pseudomonadota</taxon>
        <taxon>Gammaproteobacteria</taxon>
        <taxon>Enterobacterales</taxon>
        <taxon>Enterobacteriaceae</taxon>
        <taxon>Escherichia</taxon>
    </lineage>
</organism>
<accession>A1A9N6</accession>
<name>RLMI_ECOK1</name>
<sequence>MSVRLVLAKGREKSLLRRHPWVFSGAVARMEGKASLGETIDIVDHQGKWLARGAYSPASQIRARVWTFDPSESIDIAFFTRRLQQAQKWRDWLAQKDGLDSYRLIAGESDGLPGITIDRFGNFLVLQLLSAGAEYQRAALISALQTLYPECAIYDRSDVAVRKKEGMELTQGPITGELPPALLPIEEHGMKLLVDIQHGHKTGYYLDQRDSRLATRRYVENKRVLNCFSYTGGFAVSALMGGCSQVVSVDTSHEALDIARQNVELNKLDLSKAEFVRDDVFKLLRTYRDRGEKFDVIVMDPPKFVENKSQLMGACRGYKDINMLAIQLLNEGGILLTFSCSGLMTSDLFQKIIADAAIDAGRDVQFIEQFRQAADHPVIATYPEGLYLKGFACRVM</sequence>
<feature type="chain" id="PRO_0000366230" description="Ribosomal RNA large subunit methyltransferase I">
    <location>
        <begin position="1"/>
        <end position="396"/>
    </location>
</feature>
<feature type="domain" description="PUA" evidence="1">
    <location>
        <begin position="2"/>
        <end position="81"/>
    </location>
</feature>
<reference key="1">
    <citation type="journal article" date="2007" name="J. Bacteriol.">
        <title>The genome sequence of avian pathogenic Escherichia coli strain O1:K1:H7 shares strong similarities with human extraintestinal pathogenic E. coli genomes.</title>
        <authorList>
            <person name="Johnson T.J."/>
            <person name="Kariyawasam S."/>
            <person name="Wannemuehler Y."/>
            <person name="Mangiamele P."/>
            <person name="Johnson S.J."/>
            <person name="Doetkott C."/>
            <person name="Skyberg J.A."/>
            <person name="Lynne A.M."/>
            <person name="Johnson J.R."/>
            <person name="Nolan L.K."/>
        </authorList>
    </citation>
    <scope>NUCLEOTIDE SEQUENCE [LARGE SCALE GENOMIC DNA]</scope>
</reference>
<protein>
    <recommendedName>
        <fullName evidence="1">Ribosomal RNA large subunit methyltransferase I</fullName>
        <ecNumber evidence="1">2.1.1.191</ecNumber>
    </recommendedName>
    <alternativeName>
        <fullName evidence="1">23S rRNA m5C1962 methyltransferase</fullName>
    </alternativeName>
    <alternativeName>
        <fullName evidence="1">rRNA (cytosine-C(5)-)-methyltransferase RlmI</fullName>
    </alternativeName>
</protein>
<proteinExistence type="inferred from homology"/>
<dbReference type="EC" id="2.1.1.191" evidence="1"/>
<dbReference type="EMBL" id="CP000468">
    <property type="protein sequence ID" value="ABJ00376.1"/>
    <property type="molecule type" value="Genomic_DNA"/>
</dbReference>
<dbReference type="RefSeq" id="WP_000116315.1">
    <property type="nucleotide sequence ID" value="NZ_CADILS010000016.1"/>
</dbReference>
<dbReference type="SMR" id="A1A9N6"/>
<dbReference type="KEGG" id="ecv:APECO1_72"/>
<dbReference type="HOGENOM" id="CLU_014042_0_0_6"/>
<dbReference type="Proteomes" id="UP000008216">
    <property type="component" value="Chromosome"/>
</dbReference>
<dbReference type="GO" id="GO:0005737">
    <property type="term" value="C:cytoplasm"/>
    <property type="evidence" value="ECO:0007669"/>
    <property type="project" value="UniProtKB-SubCell"/>
</dbReference>
<dbReference type="GO" id="GO:0003723">
    <property type="term" value="F:RNA binding"/>
    <property type="evidence" value="ECO:0007669"/>
    <property type="project" value="UniProtKB-KW"/>
</dbReference>
<dbReference type="GO" id="GO:0016434">
    <property type="term" value="F:rRNA (cytosine) methyltransferase activity"/>
    <property type="evidence" value="ECO:0007669"/>
    <property type="project" value="UniProtKB-UniRule"/>
</dbReference>
<dbReference type="CDD" id="cd02440">
    <property type="entry name" value="AdoMet_MTases"/>
    <property type="match status" value="1"/>
</dbReference>
<dbReference type="CDD" id="cd21153">
    <property type="entry name" value="PUA_RlmI"/>
    <property type="match status" value="1"/>
</dbReference>
<dbReference type="CDD" id="cd11572">
    <property type="entry name" value="RlmI_M_like"/>
    <property type="match status" value="1"/>
</dbReference>
<dbReference type="FunFam" id="2.30.130.10:FF:000005">
    <property type="entry name" value="Ribosomal RNA large subunit methyltransferase I"/>
    <property type="match status" value="1"/>
</dbReference>
<dbReference type="FunFam" id="3.30.750.80:FF:000002">
    <property type="entry name" value="Ribosomal RNA large subunit methyltransferase I"/>
    <property type="match status" value="1"/>
</dbReference>
<dbReference type="FunFam" id="3.40.50.150:FF:000044">
    <property type="entry name" value="Ribosomal RNA large subunit methyltransferase I"/>
    <property type="match status" value="1"/>
</dbReference>
<dbReference type="Gene3D" id="2.30.130.10">
    <property type="entry name" value="PUA domain"/>
    <property type="match status" value="1"/>
</dbReference>
<dbReference type="Gene3D" id="3.30.750.80">
    <property type="entry name" value="RNA methyltransferase domain (HRMD) like"/>
    <property type="match status" value="1"/>
</dbReference>
<dbReference type="Gene3D" id="3.40.50.150">
    <property type="entry name" value="Vaccinia Virus protein VP39"/>
    <property type="match status" value="1"/>
</dbReference>
<dbReference type="HAMAP" id="MF_01857">
    <property type="entry name" value="23SrRNA_methyltr_I"/>
    <property type="match status" value="1"/>
</dbReference>
<dbReference type="InterPro" id="IPR002478">
    <property type="entry name" value="PUA"/>
</dbReference>
<dbReference type="InterPro" id="IPR015947">
    <property type="entry name" value="PUA-like_sf"/>
</dbReference>
<dbReference type="InterPro" id="IPR036974">
    <property type="entry name" value="PUA_sf"/>
</dbReference>
<dbReference type="InterPro" id="IPR023542">
    <property type="entry name" value="RLMI"/>
</dbReference>
<dbReference type="InterPro" id="IPR041532">
    <property type="entry name" value="RlmI-like_PUA"/>
</dbReference>
<dbReference type="InterPro" id="IPR019614">
    <property type="entry name" value="SAM-dep_methyl-trfase"/>
</dbReference>
<dbReference type="InterPro" id="IPR029063">
    <property type="entry name" value="SAM-dependent_MTases_sf"/>
</dbReference>
<dbReference type="NCBIfam" id="NF011707">
    <property type="entry name" value="PRK15128.1"/>
    <property type="match status" value="1"/>
</dbReference>
<dbReference type="PANTHER" id="PTHR42873">
    <property type="entry name" value="RIBOSOMAL RNA LARGE SUBUNIT METHYLTRANSFERASE"/>
    <property type="match status" value="1"/>
</dbReference>
<dbReference type="PANTHER" id="PTHR42873:SF1">
    <property type="entry name" value="S-ADENOSYLMETHIONINE-DEPENDENT METHYLTRANSFERASE DOMAIN-CONTAINING PROTEIN"/>
    <property type="match status" value="1"/>
</dbReference>
<dbReference type="Pfam" id="PF10672">
    <property type="entry name" value="Methyltrans_SAM"/>
    <property type="match status" value="1"/>
</dbReference>
<dbReference type="Pfam" id="PF17785">
    <property type="entry name" value="PUA_3"/>
    <property type="match status" value="1"/>
</dbReference>
<dbReference type="SMART" id="SM00359">
    <property type="entry name" value="PUA"/>
    <property type="match status" value="1"/>
</dbReference>
<dbReference type="SUPFAM" id="SSF88697">
    <property type="entry name" value="PUA domain-like"/>
    <property type="match status" value="1"/>
</dbReference>
<dbReference type="SUPFAM" id="SSF53335">
    <property type="entry name" value="S-adenosyl-L-methionine-dependent methyltransferases"/>
    <property type="match status" value="1"/>
</dbReference>
<dbReference type="PROSITE" id="PS50890">
    <property type="entry name" value="PUA"/>
    <property type="match status" value="1"/>
</dbReference>
<comment type="function">
    <text evidence="1">Specifically methylates the cytosine at position 1962 (m5C1962) of 23S rRNA.</text>
</comment>
<comment type="catalytic activity">
    <reaction evidence="1">
        <text>cytidine(1962) in 23S rRNA + S-adenosyl-L-methionine = 5-methylcytidine(1962) in 23S rRNA + S-adenosyl-L-homocysteine + H(+)</text>
        <dbReference type="Rhea" id="RHEA:42912"/>
        <dbReference type="Rhea" id="RHEA-COMP:10382"/>
        <dbReference type="Rhea" id="RHEA-COMP:10386"/>
        <dbReference type="ChEBI" id="CHEBI:15378"/>
        <dbReference type="ChEBI" id="CHEBI:57856"/>
        <dbReference type="ChEBI" id="CHEBI:59789"/>
        <dbReference type="ChEBI" id="CHEBI:74483"/>
        <dbReference type="ChEBI" id="CHEBI:82748"/>
        <dbReference type="EC" id="2.1.1.191"/>
    </reaction>
</comment>
<comment type="subcellular location">
    <subcellularLocation>
        <location evidence="1">Cytoplasm</location>
    </subcellularLocation>
</comment>
<comment type="similarity">
    <text evidence="1">Belongs to the methyltransferase superfamily. RlmI family.</text>
</comment>